<comment type="function">
    <text>Tetrapolymerization of the monopyrrole PBG into the hydroxymethylbilane pre-uroporphyrinogen in several discrete steps.</text>
</comment>
<comment type="catalytic activity">
    <reaction>
        <text>4 porphobilinogen + H2O = hydroxymethylbilane + 4 NH4(+)</text>
        <dbReference type="Rhea" id="RHEA:13185"/>
        <dbReference type="ChEBI" id="CHEBI:15377"/>
        <dbReference type="ChEBI" id="CHEBI:28938"/>
        <dbReference type="ChEBI" id="CHEBI:57845"/>
        <dbReference type="ChEBI" id="CHEBI:58126"/>
        <dbReference type="EC" id="2.5.1.61"/>
    </reaction>
</comment>
<comment type="cofactor">
    <cofactor>
        <name>dipyrromethane</name>
        <dbReference type="ChEBI" id="CHEBI:60342"/>
    </cofactor>
    <text>Binds 1 dipyrromethane group covalently.</text>
</comment>
<comment type="pathway">
    <text>Porphyrin-containing compound metabolism; protoporphyrin-IX biosynthesis; coproporphyrinogen-III from 5-aminolevulinate: step 2/4.</text>
</comment>
<comment type="pathway">
    <text>Porphyrin-containing compound metabolism; chlorophyll biosynthesis.</text>
</comment>
<comment type="subcellular location">
    <subcellularLocation>
        <location>Plastid</location>
        <location>Chloroplast</location>
    </subcellularLocation>
</comment>
<comment type="miscellaneous">
    <text evidence="1">The porphobilinogen subunits are added to the dipyrromethane group.</text>
</comment>
<comment type="similarity">
    <text evidence="2">Belongs to the HMBS family.</text>
</comment>
<reference key="1">
    <citation type="journal article" date="1989" name="Eur. J. Biochem.">
        <title>Isolation and characterisation of a cDNA clone for a chlorophyll synthesis enzyme from Euglena gracilis. The chloroplast enzyme hydroxymethylbilane synthase (porphobilinogen deaminase) is synthesised with a very long transit peptide in Euglena.</title>
        <authorList>
            <person name="Sharif A.L."/>
            <person name="Smith A.G."/>
            <person name="Abell C."/>
        </authorList>
    </citation>
    <scope>NUCLEOTIDE SEQUENCE [MRNA]</scope>
    <scope>PARTIAL PROTEIN SEQUENCE</scope>
</reference>
<organism>
    <name type="scientific">Euglena gracilis</name>
    <dbReference type="NCBI Taxonomy" id="3039"/>
    <lineage>
        <taxon>Eukaryota</taxon>
        <taxon>Discoba</taxon>
        <taxon>Euglenozoa</taxon>
        <taxon>Euglenida</taxon>
        <taxon>Spirocuta</taxon>
        <taxon>Euglenophyceae</taxon>
        <taxon>Euglenales</taxon>
        <taxon>Euglenaceae</taxon>
        <taxon>Euglena</taxon>
    </lineage>
</organism>
<proteinExistence type="evidence at protein level"/>
<evidence type="ECO:0000250" key="1"/>
<evidence type="ECO:0000305" key="2"/>
<feature type="transit peptide" description="Chloroplast">
    <location>
        <begin position="1"/>
        <end position="139"/>
    </location>
</feature>
<feature type="chain" id="PRO_0000013324" description="Porphobilinogen deaminase, chloroplastic">
    <location>
        <begin position="140"/>
        <end position="480"/>
    </location>
</feature>
<feature type="modified residue" description="S-(dipyrrolylmethanemethyl)cysteine" evidence="1">
    <location>
        <position position="395"/>
    </location>
</feature>
<dbReference type="EC" id="2.5.1.61"/>
<dbReference type="EMBL" id="X15743">
    <property type="protein sequence ID" value="CAA33759.1"/>
    <property type="molecule type" value="mRNA"/>
</dbReference>
<dbReference type="PIR" id="S06109">
    <property type="entry name" value="IBEG"/>
</dbReference>
<dbReference type="SMR" id="P13446"/>
<dbReference type="UniPathway" id="UPA00251">
    <property type="reaction ID" value="UER00319"/>
</dbReference>
<dbReference type="UniPathway" id="UPA00668"/>
<dbReference type="GO" id="GO:0009507">
    <property type="term" value="C:chloroplast"/>
    <property type="evidence" value="ECO:0007669"/>
    <property type="project" value="UniProtKB-SubCell"/>
</dbReference>
<dbReference type="GO" id="GO:0004418">
    <property type="term" value="F:hydroxymethylbilane synthase activity"/>
    <property type="evidence" value="ECO:0007669"/>
    <property type="project" value="UniProtKB-EC"/>
</dbReference>
<dbReference type="GO" id="GO:0015995">
    <property type="term" value="P:chlorophyll biosynthetic process"/>
    <property type="evidence" value="ECO:0007669"/>
    <property type="project" value="UniProtKB-UniPathway"/>
</dbReference>
<dbReference type="GO" id="GO:0006782">
    <property type="term" value="P:protoporphyrinogen IX biosynthetic process"/>
    <property type="evidence" value="ECO:0007669"/>
    <property type="project" value="UniProtKB-UniPathway"/>
</dbReference>
<dbReference type="CDD" id="cd13646">
    <property type="entry name" value="PBP2_EcHMBS_like"/>
    <property type="match status" value="1"/>
</dbReference>
<dbReference type="FunFam" id="3.40.190.10:FF:000004">
    <property type="entry name" value="Porphobilinogen deaminase"/>
    <property type="match status" value="1"/>
</dbReference>
<dbReference type="FunFam" id="3.40.190.10:FF:000005">
    <property type="entry name" value="Porphobilinogen deaminase"/>
    <property type="match status" value="1"/>
</dbReference>
<dbReference type="Gene3D" id="3.40.190.10">
    <property type="entry name" value="Periplasmic binding protein-like II"/>
    <property type="match status" value="2"/>
</dbReference>
<dbReference type="Gene3D" id="3.30.160.40">
    <property type="entry name" value="Porphobilinogen deaminase, C-terminal domain"/>
    <property type="match status" value="1"/>
</dbReference>
<dbReference type="HAMAP" id="MF_00260">
    <property type="entry name" value="Porphobil_deam"/>
    <property type="match status" value="1"/>
</dbReference>
<dbReference type="InterPro" id="IPR000860">
    <property type="entry name" value="HemC"/>
</dbReference>
<dbReference type="InterPro" id="IPR022419">
    <property type="entry name" value="Porphobilin_deaminase_cofac_BS"/>
</dbReference>
<dbReference type="InterPro" id="IPR022417">
    <property type="entry name" value="Porphobilin_deaminase_N"/>
</dbReference>
<dbReference type="InterPro" id="IPR022418">
    <property type="entry name" value="Porphobilinogen_deaminase_C"/>
</dbReference>
<dbReference type="InterPro" id="IPR036803">
    <property type="entry name" value="Porphobilinogen_deaminase_C_sf"/>
</dbReference>
<dbReference type="NCBIfam" id="TIGR00212">
    <property type="entry name" value="hemC"/>
    <property type="match status" value="1"/>
</dbReference>
<dbReference type="PANTHER" id="PTHR11557">
    <property type="entry name" value="PORPHOBILINOGEN DEAMINASE"/>
    <property type="match status" value="1"/>
</dbReference>
<dbReference type="PANTHER" id="PTHR11557:SF0">
    <property type="entry name" value="PORPHOBILINOGEN DEAMINASE"/>
    <property type="match status" value="1"/>
</dbReference>
<dbReference type="Pfam" id="PF01379">
    <property type="entry name" value="Porphobil_deam"/>
    <property type="match status" value="1"/>
</dbReference>
<dbReference type="Pfam" id="PF03900">
    <property type="entry name" value="Porphobil_deamC"/>
    <property type="match status" value="1"/>
</dbReference>
<dbReference type="PRINTS" id="PR00151">
    <property type="entry name" value="PORPHBDMNASE"/>
</dbReference>
<dbReference type="SUPFAM" id="SSF53850">
    <property type="entry name" value="Periplasmic binding protein-like II"/>
    <property type="match status" value="1"/>
</dbReference>
<dbReference type="SUPFAM" id="SSF54782">
    <property type="entry name" value="Porphobilinogen deaminase (hydroxymethylbilane synthase), C-terminal domain"/>
    <property type="match status" value="1"/>
</dbReference>
<dbReference type="PROSITE" id="PS00533">
    <property type="entry name" value="PORPHOBILINOGEN_DEAM"/>
    <property type="match status" value="1"/>
</dbReference>
<accession>P13446</accession>
<protein>
    <recommendedName>
        <fullName>Porphobilinogen deaminase, chloroplastic</fullName>
        <shortName>PBG</shortName>
        <ecNumber>2.5.1.61</ecNumber>
    </recommendedName>
    <alternativeName>
        <fullName>Hydroxymethylbilane synthase</fullName>
        <shortName>HMBS</shortName>
    </alternativeName>
    <alternativeName>
        <fullName>Pre-uroporphyrinogen synthase</fullName>
    </alternativeName>
</protein>
<keyword id="KW-0149">Chlorophyll biosynthesis</keyword>
<keyword id="KW-0150">Chloroplast</keyword>
<keyword id="KW-0903">Direct protein sequencing</keyword>
<keyword id="KW-0934">Plastid</keyword>
<keyword id="KW-0627">Porphyrin biosynthesis</keyword>
<keyword id="KW-0808">Transferase</keyword>
<keyword id="KW-0809">Transit peptide</keyword>
<sequence>MYCGRYETIGETRGNSLNVFIGAAAGFVAAVALINSGLATSFYSTPVRAVPQVIVPSSLAASSQLPVVPKETNIQVNSAQILYPDSTVKGQERTITILGVCSFLSASLFYIWKQFGMKARTTKPADLQEVSGGRIWSLASTTGSNIGAGKTVRVATRKSPLAMWQAEFIQSELERLWPGITVELQPMSTRGDKILDSPLAKVGGKGLFVKELETALLENRSDIAVHSTKDVPMELPEGLVLGVICKRHDPCDAIVFPKGSNLKSLEDLPHGARVGTSSLRRQCQLLLKRPDLKFLELRGNVNTRLAKLDSGDYDAIILAAAGLKRLGFSDRVLPGETNIIDPNVMCPAAGQGALSIELRTNDPEIAALLEPLHHIPDAVTVACERAMNRRLNGGCQVPISGFAQLKDGQLRMEARVGSVTGKGPLIIQSKTFRLPWSGRTWPQLQKESEALGVEVADMLLADGAQAYLDEAYASRTLGWA</sequence>
<name>HEM3_EUGGR</name>